<gene>
    <name evidence="1" type="primary">rplM</name>
    <name type="ordered locus">BAD_0309</name>
</gene>
<dbReference type="EMBL" id="AP009256">
    <property type="protein sequence ID" value="BAF39090.1"/>
    <property type="molecule type" value="Genomic_DNA"/>
</dbReference>
<dbReference type="RefSeq" id="WP_003807927.1">
    <property type="nucleotide sequence ID" value="NZ_CAXVNC010000001.1"/>
</dbReference>
<dbReference type="SMR" id="A1A057"/>
<dbReference type="STRING" id="367928.BAD_0309"/>
<dbReference type="PaxDb" id="1680-BADO_0318"/>
<dbReference type="GeneID" id="4557350"/>
<dbReference type="KEGG" id="bad:BAD_0309"/>
<dbReference type="HOGENOM" id="CLU_082184_2_1_11"/>
<dbReference type="Proteomes" id="UP000008702">
    <property type="component" value="Chromosome"/>
</dbReference>
<dbReference type="GO" id="GO:0022625">
    <property type="term" value="C:cytosolic large ribosomal subunit"/>
    <property type="evidence" value="ECO:0007669"/>
    <property type="project" value="TreeGrafter"/>
</dbReference>
<dbReference type="GO" id="GO:0003729">
    <property type="term" value="F:mRNA binding"/>
    <property type="evidence" value="ECO:0007669"/>
    <property type="project" value="TreeGrafter"/>
</dbReference>
<dbReference type="GO" id="GO:0003735">
    <property type="term" value="F:structural constituent of ribosome"/>
    <property type="evidence" value="ECO:0007669"/>
    <property type="project" value="InterPro"/>
</dbReference>
<dbReference type="GO" id="GO:0017148">
    <property type="term" value="P:negative regulation of translation"/>
    <property type="evidence" value="ECO:0007669"/>
    <property type="project" value="TreeGrafter"/>
</dbReference>
<dbReference type="GO" id="GO:0006412">
    <property type="term" value="P:translation"/>
    <property type="evidence" value="ECO:0007669"/>
    <property type="project" value="UniProtKB-UniRule"/>
</dbReference>
<dbReference type="CDD" id="cd00392">
    <property type="entry name" value="Ribosomal_L13"/>
    <property type="match status" value="1"/>
</dbReference>
<dbReference type="Gene3D" id="3.90.1180.10">
    <property type="entry name" value="Ribosomal protein L13"/>
    <property type="match status" value="1"/>
</dbReference>
<dbReference type="HAMAP" id="MF_01366">
    <property type="entry name" value="Ribosomal_uL13"/>
    <property type="match status" value="1"/>
</dbReference>
<dbReference type="InterPro" id="IPR005822">
    <property type="entry name" value="Ribosomal_uL13"/>
</dbReference>
<dbReference type="InterPro" id="IPR005823">
    <property type="entry name" value="Ribosomal_uL13_bac-type"/>
</dbReference>
<dbReference type="InterPro" id="IPR036899">
    <property type="entry name" value="Ribosomal_uL13_sf"/>
</dbReference>
<dbReference type="NCBIfam" id="TIGR01066">
    <property type="entry name" value="rplM_bact"/>
    <property type="match status" value="1"/>
</dbReference>
<dbReference type="PANTHER" id="PTHR11545:SF2">
    <property type="entry name" value="LARGE RIBOSOMAL SUBUNIT PROTEIN UL13M"/>
    <property type="match status" value="1"/>
</dbReference>
<dbReference type="PANTHER" id="PTHR11545">
    <property type="entry name" value="RIBOSOMAL PROTEIN L13"/>
    <property type="match status" value="1"/>
</dbReference>
<dbReference type="Pfam" id="PF00572">
    <property type="entry name" value="Ribosomal_L13"/>
    <property type="match status" value="1"/>
</dbReference>
<dbReference type="PIRSF" id="PIRSF002181">
    <property type="entry name" value="Ribosomal_L13"/>
    <property type="match status" value="1"/>
</dbReference>
<dbReference type="SUPFAM" id="SSF52161">
    <property type="entry name" value="Ribosomal protein L13"/>
    <property type="match status" value="1"/>
</dbReference>
<feature type="chain" id="PRO_1000055346" description="Large ribosomal subunit protein uL13">
    <location>
        <begin position="1"/>
        <end position="149"/>
    </location>
</feature>
<proteinExistence type="inferred from homology"/>
<organism>
    <name type="scientific">Bifidobacterium adolescentis (strain ATCC 15703 / DSM 20083 / NCTC 11814 / E194a)</name>
    <dbReference type="NCBI Taxonomy" id="367928"/>
    <lineage>
        <taxon>Bacteria</taxon>
        <taxon>Bacillati</taxon>
        <taxon>Actinomycetota</taxon>
        <taxon>Actinomycetes</taxon>
        <taxon>Bifidobacteriales</taxon>
        <taxon>Bifidobacteriaceae</taxon>
        <taxon>Bifidobacterium</taxon>
    </lineage>
</organism>
<sequence>MKTFTPKPADLTHDWYVIDATDVVLGRLATQAATLLRGKNKPTYAPHADSGNHVIILNADKIALTGNKLGKELYMHSGRPGGLRRDSYAQLLKTNPERIIKSAIKGMLPKNRLAKVQLDRLHIVRGAEHPYAGMKPQVFEIAQVSQQAK</sequence>
<evidence type="ECO:0000255" key="1">
    <source>
        <dbReference type="HAMAP-Rule" id="MF_01366"/>
    </source>
</evidence>
<evidence type="ECO:0000305" key="2"/>
<comment type="function">
    <text evidence="1">This protein is one of the early assembly proteins of the 50S ribosomal subunit, although it is not seen to bind rRNA by itself. It is important during the early stages of 50S assembly.</text>
</comment>
<comment type="subunit">
    <text evidence="1">Part of the 50S ribosomal subunit.</text>
</comment>
<comment type="similarity">
    <text evidence="1">Belongs to the universal ribosomal protein uL13 family.</text>
</comment>
<accession>A1A057</accession>
<protein>
    <recommendedName>
        <fullName evidence="1">Large ribosomal subunit protein uL13</fullName>
    </recommendedName>
    <alternativeName>
        <fullName evidence="2">50S ribosomal protein L13</fullName>
    </alternativeName>
</protein>
<name>RL13_BIFAA</name>
<reference key="1">
    <citation type="submission" date="2006-12" db="EMBL/GenBank/DDBJ databases">
        <title>Bifidobacterium adolescentis complete genome sequence.</title>
        <authorList>
            <person name="Suzuki T."/>
            <person name="Tsuda Y."/>
            <person name="Kanou N."/>
            <person name="Inoue T."/>
            <person name="Kumazaki K."/>
            <person name="Nagano S."/>
            <person name="Hirai S."/>
            <person name="Tanaka K."/>
            <person name="Watanabe K."/>
        </authorList>
    </citation>
    <scope>NUCLEOTIDE SEQUENCE [LARGE SCALE GENOMIC DNA]</scope>
    <source>
        <strain>ATCC 15703 / DSM 20083 / NCTC 11814 / E194a</strain>
    </source>
</reference>
<keyword id="KW-1185">Reference proteome</keyword>
<keyword id="KW-0687">Ribonucleoprotein</keyword>
<keyword id="KW-0689">Ribosomal protein</keyword>